<proteinExistence type="evidence at transcript level"/>
<accession>Q5PP29</accession>
<accession>Q9LFY9</accession>
<name>PBL4_ARATH</name>
<comment type="function">
    <text evidence="1">May be involved in plant defense signaling.</text>
</comment>
<comment type="catalytic activity">
    <reaction evidence="6">
        <text>L-seryl-[protein] + ATP = O-phospho-L-seryl-[protein] + ADP + H(+)</text>
        <dbReference type="Rhea" id="RHEA:17989"/>
        <dbReference type="Rhea" id="RHEA-COMP:9863"/>
        <dbReference type="Rhea" id="RHEA-COMP:11604"/>
        <dbReference type="ChEBI" id="CHEBI:15378"/>
        <dbReference type="ChEBI" id="CHEBI:29999"/>
        <dbReference type="ChEBI" id="CHEBI:30616"/>
        <dbReference type="ChEBI" id="CHEBI:83421"/>
        <dbReference type="ChEBI" id="CHEBI:456216"/>
        <dbReference type="EC" id="2.7.11.1"/>
    </reaction>
</comment>
<comment type="catalytic activity">
    <reaction evidence="6">
        <text>L-threonyl-[protein] + ATP = O-phospho-L-threonyl-[protein] + ADP + H(+)</text>
        <dbReference type="Rhea" id="RHEA:46608"/>
        <dbReference type="Rhea" id="RHEA-COMP:11060"/>
        <dbReference type="Rhea" id="RHEA-COMP:11605"/>
        <dbReference type="ChEBI" id="CHEBI:15378"/>
        <dbReference type="ChEBI" id="CHEBI:30013"/>
        <dbReference type="ChEBI" id="CHEBI:30616"/>
        <dbReference type="ChEBI" id="CHEBI:61977"/>
        <dbReference type="ChEBI" id="CHEBI:456216"/>
        <dbReference type="EC" id="2.7.11.1"/>
    </reaction>
</comment>
<comment type="subcellular location">
    <subcellularLocation>
        <location evidence="1">Cell membrane</location>
        <topology evidence="1">Lipid-anchor</topology>
    </subcellularLocation>
</comment>
<comment type="similarity">
    <text evidence="3">Belongs to the protein kinase superfamily. Ser/Thr protein kinase family.</text>
</comment>
<comment type="sequence caution" evidence="6">
    <conflict type="erroneous gene model prediction">
        <sequence resource="EMBL-CDS" id="AAF79849"/>
    </conflict>
</comment>
<sequence length="412" mass="45527">MGNCFGFSAKVGNRESPYRGSSRISAKRSQSSRLSSLTIQSSSYNDDTSVASLQTPRSEGELLASPTLKAFTFNELKTATRNFRPDSVIGEGGFGYVYKGWIDERTLSPSKPGSGMVVAVKKLKEEGFQGHRQWLAEVDCLGRLHHMNLVKLIGYCSKGDHIRLLVYEYMPKGSLENHLFRRGAEPIPWRTRIKVAIGAARGLAFLHEAQVIYRDFKASNILLDSEFNAKLSDFGLAKVGPTGDRTHVSTQVMGTQGYAAPEYVATGRITAKSDVYSFGVVLLELLSGRLTVDKTKVGVERNLVDWAIPYLGDKRKVFRIMDTKLGGQYPHKGACLTANTALQCLNQEPKLRPKMSDVLSTLEELEMTLKSGSISNSVMKLTSSSSSFTAKQRVRTPVADPVLSSRRCRRVR</sequence>
<organism>
    <name type="scientific">Arabidopsis thaliana</name>
    <name type="common">Mouse-ear cress</name>
    <dbReference type="NCBI Taxonomy" id="3702"/>
    <lineage>
        <taxon>Eukaryota</taxon>
        <taxon>Viridiplantae</taxon>
        <taxon>Streptophyta</taxon>
        <taxon>Embryophyta</taxon>
        <taxon>Tracheophyta</taxon>
        <taxon>Spermatophyta</taxon>
        <taxon>Magnoliopsida</taxon>
        <taxon>eudicotyledons</taxon>
        <taxon>Gunneridae</taxon>
        <taxon>Pentapetalae</taxon>
        <taxon>rosids</taxon>
        <taxon>malvids</taxon>
        <taxon>Brassicales</taxon>
        <taxon>Brassicaceae</taxon>
        <taxon>Camelineae</taxon>
        <taxon>Arabidopsis</taxon>
    </lineage>
</organism>
<keyword id="KW-0067">ATP-binding</keyword>
<keyword id="KW-1003">Cell membrane</keyword>
<keyword id="KW-0418">Kinase</keyword>
<keyword id="KW-0449">Lipoprotein</keyword>
<keyword id="KW-0472">Membrane</keyword>
<keyword id="KW-0519">Myristate</keyword>
<keyword id="KW-0547">Nucleotide-binding</keyword>
<keyword id="KW-0564">Palmitate</keyword>
<keyword id="KW-0597">Phosphoprotein</keyword>
<keyword id="KW-0611">Plant defense</keyword>
<keyword id="KW-1185">Reference proteome</keyword>
<keyword id="KW-0723">Serine/threonine-protein kinase</keyword>
<keyword id="KW-0808">Transferase</keyword>
<dbReference type="EC" id="2.7.11.1" evidence="6"/>
<dbReference type="EMBL" id="AC000348">
    <property type="protein sequence ID" value="AAF79849.1"/>
    <property type="status" value="ALT_SEQ"/>
    <property type="molecule type" value="Genomic_DNA"/>
</dbReference>
<dbReference type="EMBL" id="CP002684">
    <property type="protein sequence ID" value="AEE30765.1"/>
    <property type="molecule type" value="Genomic_DNA"/>
</dbReference>
<dbReference type="EMBL" id="BT020268">
    <property type="protein sequence ID" value="AAV84489.1"/>
    <property type="molecule type" value="mRNA"/>
</dbReference>
<dbReference type="EMBL" id="BT020441">
    <property type="protein sequence ID" value="AAW30020.1"/>
    <property type="molecule type" value="mRNA"/>
</dbReference>
<dbReference type="PIR" id="G86396">
    <property type="entry name" value="G86396"/>
</dbReference>
<dbReference type="RefSeq" id="NP_174019.2">
    <property type="nucleotide sequence ID" value="NM_102461.3"/>
</dbReference>
<dbReference type="SMR" id="Q5PP29"/>
<dbReference type="FunCoup" id="Q5PP29">
    <property type="interactions" value="2371"/>
</dbReference>
<dbReference type="STRING" id="3702.Q5PP29"/>
<dbReference type="GlyGen" id="Q5PP29">
    <property type="glycosylation" value="1 site"/>
</dbReference>
<dbReference type="iPTMnet" id="Q5PP29"/>
<dbReference type="PaxDb" id="3702-AT1G26970.1"/>
<dbReference type="ProteomicsDB" id="236794"/>
<dbReference type="EnsemblPlants" id="AT1G26970.1">
    <property type="protein sequence ID" value="AT1G26970.1"/>
    <property type="gene ID" value="AT1G26970"/>
</dbReference>
<dbReference type="GeneID" id="839588"/>
<dbReference type="Gramene" id="AT1G26970.1">
    <property type="protein sequence ID" value="AT1G26970.1"/>
    <property type="gene ID" value="AT1G26970"/>
</dbReference>
<dbReference type="KEGG" id="ath:AT1G26970"/>
<dbReference type="Araport" id="AT1G26970"/>
<dbReference type="TAIR" id="AT1G26970">
    <property type="gene designation" value="PBL4"/>
</dbReference>
<dbReference type="eggNOG" id="KOG1187">
    <property type="taxonomic scope" value="Eukaryota"/>
</dbReference>
<dbReference type="HOGENOM" id="CLU_000288_21_1_1"/>
<dbReference type="InParanoid" id="Q5PP29"/>
<dbReference type="OMA" id="TSKTVMK"/>
<dbReference type="PhylomeDB" id="Q5PP29"/>
<dbReference type="PRO" id="PR:Q5PP29"/>
<dbReference type="Proteomes" id="UP000006548">
    <property type="component" value="Chromosome 1"/>
</dbReference>
<dbReference type="ExpressionAtlas" id="Q5PP29">
    <property type="expression patterns" value="baseline and differential"/>
</dbReference>
<dbReference type="GO" id="GO:0005886">
    <property type="term" value="C:plasma membrane"/>
    <property type="evidence" value="ECO:0007669"/>
    <property type="project" value="UniProtKB-SubCell"/>
</dbReference>
<dbReference type="GO" id="GO:0005524">
    <property type="term" value="F:ATP binding"/>
    <property type="evidence" value="ECO:0007669"/>
    <property type="project" value="UniProtKB-KW"/>
</dbReference>
<dbReference type="GO" id="GO:0106310">
    <property type="term" value="F:protein serine kinase activity"/>
    <property type="evidence" value="ECO:0007669"/>
    <property type="project" value="RHEA"/>
</dbReference>
<dbReference type="GO" id="GO:0004674">
    <property type="term" value="F:protein serine/threonine kinase activity"/>
    <property type="evidence" value="ECO:0007669"/>
    <property type="project" value="UniProtKB-KW"/>
</dbReference>
<dbReference type="GO" id="GO:0006952">
    <property type="term" value="P:defense response"/>
    <property type="evidence" value="ECO:0007669"/>
    <property type="project" value="UniProtKB-KW"/>
</dbReference>
<dbReference type="CDD" id="cd14066">
    <property type="entry name" value="STKc_IRAK"/>
    <property type="match status" value="1"/>
</dbReference>
<dbReference type="FunFam" id="3.30.200.20:FF:000228">
    <property type="entry name" value="Serine/threonine-protein kinase BIK1"/>
    <property type="match status" value="1"/>
</dbReference>
<dbReference type="FunFam" id="1.10.510.10:FF:000032">
    <property type="entry name" value="Serine/threonine-protein kinase PBS1"/>
    <property type="match status" value="1"/>
</dbReference>
<dbReference type="Gene3D" id="3.30.200.20">
    <property type="entry name" value="Phosphorylase Kinase, domain 1"/>
    <property type="match status" value="1"/>
</dbReference>
<dbReference type="Gene3D" id="1.10.510.10">
    <property type="entry name" value="Transferase(Phosphotransferase) domain 1"/>
    <property type="match status" value="1"/>
</dbReference>
<dbReference type="InterPro" id="IPR011009">
    <property type="entry name" value="Kinase-like_dom_sf"/>
</dbReference>
<dbReference type="InterPro" id="IPR050823">
    <property type="entry name" value="Plant_Ser_Thr_Prot_Kinase"/>
</dbReference>
<dbReference type="InterPro" id="IPR000719">
    <property type="entry name" value="Prot_kinase_dom"/>
</dbReference>
<dbReference type="InterPro" id="IPR017441">
    <property type="entry name" value="Protein_kinase_ATP_BS"/>
</dbReference>
<dbReference type="InterPro" id="IPR001245">
    <property type="entry name" value="Ser-Thr/Tyr_kinase_cat_dom"/>
</dbReference>
<dbReference type="InterPro" id="IPR008271">
    <property type="entry name" value="Ser/Thr_kinase_AS"/>
</dbReference>
<dbReference type="PANTHER" id="PTHR45621">
    <property type="entry name" value="OS01G0588500 PROTEIN-RELATED"/>
    <property type="match status" value="1"/>
</dbReference>
<dbReference type="Pfam" id="PF07714">
    <property type="entry name" value="PK_Tyr_Ser-Thr"/>
    <property type="match status" value="1"/>
</dbReference>
<dbReference type="SUPFAM" id="SSF56112">
    <property type="entry name" value="Protein kinase-like (PK-like)"/>
    <property type="match status" value="1"/>
</dbReference>
<dbReference type="PROSITE" id="PS00107">
    <property type="entry name" value="PROTEIN_KINASE_ATP"/>
    <property type="match status" value="1"/>
</dbReference>
<dbReference type="PROSITE" id="PS50011">
    <property type="entry name" value="PROTEIN_KINASE_DOM"/>
    <property type="match status" value="1"/>
</dbReference>
<dbReference type="PROSITE" id="PS00108">
    <property type="entry name" value="PROTEIN_KINASE_ST"/>
    <property type="match status" value="1"/>
</dbReference>
<evidence type="ECO:0000250" key="1">
    <source>
        <dbReference type="UniProtKB" id="O48814"/>
    </source>
</evidence>
<evidence type="ECO:0000250" key="2">
    <source>
        <dbReference type="UniProtKB" id="Q9FE20"/>
    </source>
</evidence>
<evidence type="ECO:0000255" key="3">
    <source>
        <dbReference type="PROSITE-ProRule" id="PRU00159"/>
    </source>
</evidence>
<evidence type="ECO:0000256" key="4">
    <source>
        <dbReference type="SAM" id="MobiDB-lite"/>
    </source>
</evidence>
<evidence type="ECO:0000303" key="5">
    <source>
    </source>
</evidence>
<evidence type="ECO:0000305" key="6"/>
<evidence type="ECO:0000312" key="7">
    <source>
        <dbReference type="Araport" id="AT1G26970"/>
    </source>
</evidence>
<evidence type="ECO:0000312" key="8">
    <source>
        <dbReference type="EMBL" id="AAF79849.1"/>
    </source>
</evidence>
<gene>
    <name evidence="5" type="primary">PBL4</name>
    <name evidence="7" type="ordered locus">At1g26970</name>
    <name evidence="8" type="ORF">T7N9.2</name>
</gene>
<protein>
    <recommendedName>
        <fullName evidence="6">Probable serine/threonine-protein kinase PBL4</fullName>
        <ecNumber evidence="6">2.7.11.1</ecNumber>
    </recommendedName>
    <alternativeName>
        <fullName evidence="5">PBS1-like protein 4</fullName>
    </alternativeName>
</protein>
<feature type="initiator methionine" description="Removed" evidence="6">
    <location>
        <position position="1"/>
    </location>
</feature>
<feature type="chain" id="PRO_0000438605" description="Probable serine/threonine-protein kinase PBL4">
    <location>
        <begin position="2"/>
        <end position="412"/>
    </location>
</feature>
<feature type="domain" description="Protein kinase" evidence="3">
    <location>
        <begin position="83"/>
        <end position="369"/>
    </location>
</feature>
<feature type="region of interest" description="Disordered" evidence="4">
    <location>
        <begin position="14"/>
        <end position="40"/>
    </location>
</feature>
<feature type="compositionally biased region" description="Low complexity" evidence="4">
    <location>
        <begin position="21"/>
        <end position="40"/>
    </location>
</feature>
<feature type="active site" description="Proton acceptor" evidence="3">
    <location>
        <position position="215"/>
    </location>
</feature>
<feature type="binding site" evidence="3">
    <location>
        <begin position="89"/>
        <end position="97"/>
    </location>
    <ligand>
        <name>ATP</name>
        <dbReference type="ChEBI" id="CHEBI:30616"/>
    </ligand>
</feature>
<feature type="binding site" evidence="3">
    <location>
        <position position="121"/>
    </location>
    <ligand>
        <name>ATP</name>
        <dbReference type="ChEBI" id="CHEBI:30616"/>
    </ligand>
</feature>
<feature type="modified residue" description="Phosphothreonine" evidence="1">
    <location>
        <position position="72"/>
    </location>
</feature>
<feature type="modified residue" description="Phosphotyrosine" evidence="1">
    <location>
        <position position="167"/>
    </location>
</feature>
<feature type="modified residue" description="Phosphoserine" evidence="1">
    <location>
        <position position="219"/>
    </location>
</feature>
<feature type="modified residue" description="Phosphoserine" evidence="1">
    <location>
        <position position="249"/>
    </location>
</feature>
<feature type="modified residue" description="Phosphothreonine" evidence="1">
    <location>
        <position position="250"/>
    </location>
</feature>
<feature type="modified residue" description="Phosphothreonine" evidence="1">
    <location>
        <position position="255"/>
    </location>
</feature>
<feature type="modified residue" description="Phosphotyrosine" evidence="1">
    <location>
        <position position="263"/>
    </location>
</feature>
<feature type="lipid moiety-binding region" description="N-myristoyl glycine" evidence="2">
    <location>
        <position position="2"/>
    </location>
</feature>
<feature type="lipid moiety-binding region" description="S-palmitoyl cysteine" evidence="2">
    <location>
        <position position="4"/>
    </location>
</feature>
<reference key="1">
    <citation type="journal article" date="2000" name="Nature">
        <title>Sequence and analysis of chromosome 1 of the plant Arabidopsis thaliana.</title>
        <authorList>
            <person name="Theologis A."/>
            <person name="Ecker J.R."/>
            <person name="Palm C.J."/>
            <person name="Federspiel N.A."/>
            <person name="Kaul S."/>
            <person name="White O."/>
            <person name="Alonso J."/>
            <person name="Altafi H."/>
            <person name="Araujo R."/>
            <person name="Bowman C.L."/>
            <person name="Brooks S.Y."/>
            <person name="Buehler E."/>
            <person name="Chan A."/>
            <person name="Chao Q."/>
            <person name="Chen H."/>
            <person name="Cheuk R.F."/>
            <person name="Chin C.W."/>
            <person name="Chung M.K."/>
            <person name="Conn L."/>
            <person name="Conway A.B."/>
            <person name="Conway A.R."/>
            <person name="Creasy T.H."/>
            <person name="Dewar K."/>
            <person name="Dunn P."/>
            <person name="Etgu P."/>
            <person name="Feldblyum T.V."/>
            <person name="Feng J.-D."/>
            <person name="Fong B."/>
            <person name="Fujii C.Y."/>
            <person name="Gill J.E."/>
            <person name="Goldsmith A.D."/>
            <person name="Haas B."/>
            <person name="Hansen N.F."/>
            <person name="Hughes B."/>
            <person name="Huizar L."/>
            <person name="Hunter J.L."/>
            <person name="Jenkins J."/>
            <person name="Johnson-Hopson C."/>
            <person name="Khan S."/>
            <person name="Khaykin E."/>
            <person name="Kim C.J."/>
            <person name="Koo H.L."/>
            <person name="Kremenetskaia I."/>
            <person name="Kurtz D.B."/>
            <person name="Kwan A."/>
            <person name="Lam B."/>
            <person name="Langin-Hooper S."/>
            <person name="Lee A."/>
            <person name="Lee J.M."/>
            <person name="Lenz C.A."/>
            <person name="Li J.H."/>
            <person name="Li Y.-P."/>
            <person name="Lin X."/>
            <person name="Liu S.X."/>
            <person name="Liu Z.A."/>
            <person name="Luros J.S."/>
            <person name="Maiti R."/>
            <person name="Marziali A."/>
            <person name="Militscher J."/>
            <person name="Miranda M."/>
            <person name="Nguyen M."/>
            <person name="Nierman W.C."/>
            <person name="Osborne B.I."/>
            <person name="Pai G."/>
            <person name="Peterson J."/>
            <person name="Pham P.K."/>
            <person name="Rizzo M."/>
            <person name="Rooney T."/>
            <person name="Rowley D."/>
            <person name="Sakano H."/>
            <person name="Salzberg S.L."/>
            <person name="Schwartz J.R."/>
            <person name="Shinn P."/>
            <person name="Southwick A.M."/>
            <person name="Sun H."/>
            <person name="Tallon L.J."/>
            <person name="Tambunga G."/>
            <person name="Toriumi M.J."/>
            <person name="Town C.D."/>
            <person name="Utterback T."/>
            <person name="Van Aken S."/>
            <person name="Vaysberg M."/>
            <person name="Vysotskaia V.S."/>
            <person name="Walker M."/>
            <person name="Wu D."/>
            <person name="Yu G."/>
            <person name="Fraser C.M."/>
            <person name="Venter J.C."/>
            <person name="Davis R.W."/>
        </authorList>
    </citation>
    <scope>NUCLEOTIDE SEQUENCE [LARGE SCALE GENOMIC DNA]</scope>
    <source>
        <strain>cv. Columbia</strain>
    </source>
</reference>
<reference key="2">
    <citation type="journal article" date="2017" name="Plant J.">
        <title>Araport11: a complete reannotation of the Arabidopsis thaliana reference genome.</title>
        <authorList>
            <person name="Cheng C.Y."/>
            <person name="Krishnakumar V."/>
            <person name="Chan A.P."/>
            <person name="Thibaud-Nissen F."/>
            <person name="Schobel S."/>
            <person name="Town C.D."/>
        </authorList>
    </citation>
    <scope>GENOME REANNOTATION</scope>
    <source>
        <strain>cv. Columbia</strain>
    </source>
</reference>
<reference key="3">
    <citation type="submission" date="2004-12" db="EMBL/GenBank/DDBJ databases">
        <title>Arabidopsis ORF clones.</title>
        <authorList>
            <person name="Shinn P."/>
            <person name="Chen H."/>
            <person name="Cheuk R.F."/>
            <person name="Kim C.J."/>
            <person name="Ecker J.R."/>
        </authorList>
    </citation>
    <scope>NUCLEOTIDE SEQUENCE [LARGE SCALE MRNA]</scope>
    <source>
        <strain>cv. Columbia</strain>
    </source>
</reference>
<reference key="4">
    <citation type="journal article" date="2010" name="Cell Host Microbe">
        <title>Receptor-like cytoplasmic kinases integrate signaling from multiple plant immune receptors and are targeted by a Pseudomonas syringae effector.</title>
        <authorList>
            <person name="Zhang J."/>
            <person name="Li W."/>
            <person name="Xiang T."/>
            <person name="Liu Z."/>
            <person name="Laluk K."/>
            <person name="Ding X."/>
            <person name="Zou Y."/>
            <person name="Gao M."/>
            <person name="Zhang X."/>
            <person name="Chen S."/>
            <person name="Mengiste T."/>
            <person name="Zhang Y."/>
            <person name="Zhou J.M."/>
        </authorList>
    </citation>
    <scope>GENE FAMILY</scope>
    <scope>NOMENCLATURE</scope>
</reference>